<accession>Q38065</accession>
<proteinExistence type="predicted"/>
<sequence length="83" mass="8618">MSGVVAVQVCTAWTSTPEGFMACRELAWQQAYLIPPEAAGYVDILVNGGFSPEAFGIGAAGVLGSFVTGLLIGWVASLLRKAK</sequence>
<evidence type="ECO:0000255" key="1"/>
<evidence type="ECO:0000305" key="2"/>
<dbReference type="EMBL" id="AY324828">
    <property type="protein sequence ID" value="AAQ94684.1"/>
    <property type="molecule type" value="Genomic_DNA"/>
</dbReference>
<dbReference type="EMBL" id="X52107">
    <property type="protein sequence ID" value="CAA36330.1"/>
    <property type="molecule type" value="Genomic_DNA"/>
</dbReference>
<dbReference type="PIR" id="S15142">
    <property type="entry name" value="S15142"/>
</dbReference>
<dbReference type="RefSeq" id="NP_039602.1">
    <property type="nucleotide sequence ID" value="NC_001331.1"/>
</dbReference>
<dbReference type="GeneID" id="1260713"/>
<dbReference type="KEGG" id="vg:1260713"/>
<dbReference type="Proteomes" id="UP000002121">
    <property type="component" value="Genome"/>
</dbReference>
<dbReference type="Proteomes" id="UP000273911">
    <property type="component" value="Genome"/>
</dbReference>
<dbReference type="GO" id="GO:0033644">
    <property type="term" value="C:host cell membrane"/>
    <property type="evidence" value="ECO:0007669"/>
    <property type="project" value="UniProtKB-SubCell"/>
</dbReference>
<dbReference type="GO" id="GO:0016020">
    <property type="term" value="C:membrane"/>
    <property type="evidence" value="ECO:0007669"/>
    <property type="project" value="UniProtKB-KW"/>
</dbReference>
<keyword id="KW-1043">Host membrane</keyword>
<keyword id="KW-0472">Membrane</keyword>
<keyword id="KW-1185">Reference proteome</keyword>
<keyword id="KW-0812">Transmembrane</keyword>
<keyword id="KW-1133">Transmembrane helix</keyword>
<protein>
    <recommendedName>
        <fullName>Uncharacterized protein ORF83</fullName>
        <shortName>ORF083</shortName>
    </recommendedName>
</protein>
<reference key="1">
    <citation type="journal article" date="1991" name="J. Mol. Biol.">
        <title>DNA sequence of the filamentous bacteriophage Pf1.</title>
        <authorList>
            <person name="Hill D.F."/>
            <person name="Short N.J."/>
            <person name="Perham R.N."/>
            <person name="Petersen G.B."/>
        </authorList>
    </citation>
    <scope>NUCLEOTIDE SEQUENCE [GENOMIC DNA]</scope>
</reference>
<reference key="2">
    <citation type="submission" date="2003-06" db="EMBL/GenBank/DDBJ databases">
        <title>Genome diversification by a Pf1 phage-derived genomic island in Pseudomonas aeruginosa.</title>
        <authorList>
            <person name="Kim S.-H."/>
            <person name="Lee J.-S."/>
            <person name="Cho Y.-H."/>
        </authorList>
    </citation>
    <scope>NUCLEOTIDE SEQUENCE [GENOMIC DNA]</scope>
</reference>
<comment type="function">
    <text>May play a role in phage assembly.</text>
</comment>
<comment type="subcellular location">
    <subcellularLocation>
        <location evidence="2">Host membrane</location>
        <topology evidence="2">Single-pass membrane protein</topology>
    </subcellularLocation>
</comment>
<feature type="chain" id="PRO_0000378351" description="Uncharacterized protein ORF83">
    <location>
        <begin position="1"/>
        <end position="83"/>
    </location>
</feature>
<feature type="transmembrane region" description="Helical" evidence="1">
    <location>
        <begin position="55"/>
        <end position="75"/>
    </location>
</feature>
<organism>
    <name type="scientific">Pseudomonas phage Pf1</name>
    <name type="common">Bacteriophage Pf1</name>
    <dbReference type="NCBI Taxonomy" id="2011081"/>
    <lineage>
        <taxon>Viruses</taxon>
        <taxon>Monodnaviria</taxon>
        <taxon>Loebvirae</taxon>
        <taxon>Hofneiviricota</taxon>
        <taxon>Faserviricetes</taxon>
        <taxon>Tubulavirales</taxon>
        <taxon>Inoviridae</taxon>
        <taxon>Primolicivirus</taxon>
    </lineage>
</organism>
<name>VG083_BPPF1</name>
<organismHost>
    <name type="scientific">Pseudomonas aeruginosa</name>
    <dbReference type="NCBI Taxonomy" id="287"/>
</organismHost>